<proteinExistence type="evidence at protein level"/>
<keyword id="KW-0044">Antibiotic</keyword>
<keyword id="KW-0929">Antimicrobial</keyword>
<keyword id="KW-0903">Direct protein sequencing</keyword>
<keyword id="KW-0295">Fungicide</keyword>
<comment type="function">
    <text evidence="1">Has antifungal activity against C.albicans. Has antibacterial activity against the Gram-positive bacterium S.aureus and the Gram-negative bacterium E.coli. Lacks hemolytic activity against rabbit erythrocytes.</text>
</comment>
<comment type="mass spectrometry" mass="2870.5" method="FAB" evidence="1"/>
<organism>
    <name type="scientific">Ixodes sinensis</name>
    <name type="common">Hard tick</name>
    <dbReference type="NCBI Taxonomy" id="339422"/>
    <lineage>
        <taxon>Eukaryota</taxon>
        <taxon>Metazoa</taxon>
        <taxon>Ecdysozoa</taxon>
        <taxon>Arthropoda</taxon>
        <taxon>Chelicerata</taxon>
        <taxon>Arachnida</taxon>
        <taxon>Acari</taxon>
        <taxon>Parasitiformes</taxon>
        <taxon>Ixodida</taxon>
        <taxon>Ixodoidea</taxon>
        <taxon>Ixodidae</taxon>
        <taxon>Ixodinae</taxon>
        <taxon>Ixodes</taxon>
    </lineage>
</organism>
<sequence length="79" mass="8866">MSAHKVQIGLSSGQFRVALQVPSVRLKGLGSFHTGSIVLPSQGSLREDQISLHNQDGLHKVMREVLGYERNSYKKFFLR</sequence>
<feature type="propeptide" id="PRO_0000245156" description="Removed in mature form" evidence="1">
    <location>
        <begin position="1"/>
        <end position="56"/>
    </location>
</feature>
<feature type="peptide" id="PRO_0000245157" description="Ixosin" evidence="1">
    <location>
        <begin position="57"/>
        <end position="79"/>
    </location>
</feature>
<dbReference type="EMBL" id="DQ100462">
    <property type="protein sequence ID" value="AAZ57202.1"/>
    <property type="molecule type" value="mRNA"/>
</dbReference>
<dbReference type="GO" id="GO:0050832">
    <property type="term" value="P:defense response to fungus"/>
    <property type="evidence" value="ECO:0007669"/>
    <property type="project" value="UniProtKB-KW"/>
</dbReference>
<dbReference type="GO" id="GO:0050829">
    <property type="term" value="P:defense response to Gram-negative bacterium"/>
    <property type="evidence" value="ECO:0000314"/>
    <property type="project" value="UniProtKB"/>
</dbReference>
<dbReference type="GO" id="GO:0050830">
    <property type="term" value="P:defense response to Gram-positive bacterium"/>
    <property type="evidence" value="ECO:0000314"/>
    <property type="project" value="UniProtKB"/>
</dbReference>
<dbReference type="GO" id="GO:0031640">
    <property type="term" value="P:killing of cells of another organism"/>
    <property type="evidence" value="ECO:0007669"/>
    <property type="project" value="UniProtKB-KW"/>
</dbReference>
<accession>Q2LKX9</accession>
<name>IXOSN_IXOSI</name>
<evidence type="ECO:0000269" key="1">
    <source>
    </source>
</evidence>
<evidence type="ECO:0000305" key="2"/>
<evidence type="ECO:0000312" key="3">
    <source>
        <dbReference type="EMBL" id="AAZ57202.1"/>
    </source>
</evidence>
<protein>
    <recommendedName>
        <fullName>Ixosin</fullName>
    </recommendedName>
</protein>
<reference evidence="2 3" key="1">
    <citation type="journal article" date="2006" name="Peptides">
        <title>A novel antimicrobial peptide from salivary glands of the hard tick, Ixodes sinensis.</title>
        <authorList>
            <person name="Yu D."/>
            <person name="Sheng Z."/>
            <person name="Xu X."/>
            <person name="Li J."/>
            <person name="Yang H."/>
            <person name="Liu Z."/>
            <person name="Rees H.H."/>
            <person name="Lai R."/>
        </authorList>
    </citation>
    <scope>NUCLEOTIDE SEQUENCE [MRNA]</scope>
    <scope>PROTEIN SEQUENCE OF 57-79</scope>
    <scope>MASS SPECTROMETRY</scope>
    <source>
        <tissue evidence="1">Salivary gland</tissue>
    </source>
</reference>